<evidence type="ECO:0000255" key="1">
    <source>
        <dbReference type="HAMAP-Rule" id="MF_01334"/>
    </source>
</evidence>
<evidence type="ECO:0000256" key="2">
    <source>
        <dbReference type="SAM" id="MobiDB-lite"/>
    </source>
</evidence>
<evidence type="ECO:0000305" key="3"/>
<feature type="chain" id="PRO_1000052941" description="Large ribosomal subunit protein bL25">
    <location>
        <begin position="1"/>
        <end position="209"/>
    </location>
</feature>
<feature type="region of interest" description="Disordered" evidence="2">
    <location>
        <begin position="185"/>
        <end position="209"/>
    </location>
</feature>
<feature type="compositionally biased region" description="Acidic residues" evidence="2">
    <location>
        <begin position="190"/>
        <end position="209"/>
    </location>
</feature>
<name>RL25_SYNWW</name>
<organism>
    <name type="scientific">Syntrophomonas wolfei subsp. wolfei (strain DSM 2245B / Goettingen)</name>
    <dbReference type="NCBI Taxonomy" id="335541"/>
    <lineage>
        <taxon>Bacteria</taxon>
        <taxon>Bacillati</taxon>
        <taxon>Bacillota</taxon>
        <taxon>Clostridia</taxon>
        <taxon>Eubacteriales</taxon>
        <taxon>Syntrophomonadaceae</taxon>
        <taxon>Syntrophomonas</taxon>
    </lineage>
</organism>
<proteinExistence type="inferred from homology"/>
<protein>
    <recommendedName>
        <fullName evidence="1">Large ribosomal subunit protein bL25</fullName>
    </recommendedName>
    <alternativeName>
        <fullName evidence="3">50S ribosomal protein L25</fullName>
    </alternativeName>
    <alternativeName>
        <fullName evidence="1">General stress protein CTC</fullName>
    </alternativeName>
</protein>
<dbReference type="EMBL" id="CP000448">
    <property type="protein sequence ID" value="ABI67427.1"/>
    <property type="molecule type" value="Genomic_DNA"/>
</dbReference>
<dbReference type="RefSeq" id="WP_011639538.1">
    <property type="nucleotide sequence ID" value="NC_008346.1"/>
</dbReference>
<dbReference type="SMR" id="Q0B0S7"/>
<dbReference type="STRING" id="335541.Swol_0069"/>
<dbReference type="KEGG" id="swo:Swol_0069"/>
<dbReference type="eggNOG" id="COG1825">
    <property type="taxonomic scope" value="Bacteria"/>
</dbReference>
<dbReference type="HOGENOM" id="CLU_075939_2_1_9"/>
<dbReference type="OrthoDB" id="9790002at2"/>
<dbReference type="Proteomes" id="UP000001968">
    <property type="component" value="Chromosome"/>
</dbReference>
<dbReference type="GO" id="GO:0022625">
    <property type="term" value="C:cytosolic large ribosomal subunit"/>
    <property type="evidence" value="ECO:0007669"/>
    <property type="project" value="TreeGrafter"/>
</dbReference>
<dbReference type="GO" id="GO:0008097">
    <property type="term" value="F:5S rRNA binding"/>
    <property type="evidence" value="ECO:0007669"/>
    <property type="project" value="InterPro"/>
</dbReference>
<dbReference type="GO" id="GO:0003735">
    <property type="term" value="F:structural constituent of ribosome"/>
    <property type="evidence" value="ECO:0007669"/>
    <property type="project" value="InterPro"/>
</dbReference>
<dbReference type="GO" id="GO:0006412">
    <property type="term" value="P:translation"/>
    <property type="evidence" value="ECO:0007669"/>
    <property type="project" value="UniProtKB-UniRule"/>
</dbReference>
<dbReference type="CDD" id="cd00495">
    <property type="entry name" value="Ribosomal_L25_TL5_CTC"/>
    <property type="match status" value="1"/>
</dbReference>
<dbReference type="Gene3D" id="2.170.120.20">
    <property type="entry name" value="Ribosomal protein L25, beta domain"/>
    <property type="match status" value="1"/>
</dbReference>
<dbReference type="Gene3D" id="2.40.240.10">
    <property type="entry name" value="Ribosomal Protein L25, Chain P"/>
    <property type="match status" value="1"/>
</dbReference>
<dbReference type="HAMAP" id="MF_01334">
    <property type="entry name" value="Ribosomal_bL25_CTC"/>
    <property type="match status" value="1"/>
</dbReference>
<dbReference type="InterPro" id="IPR020056">
    <property type="entry name" value="Rbsml_bL25/Gln-tRNA_synth_N"/>
</dbReference>
<dbReference type="InterPro" id="IPR011035">
    <property type="entry name" value="Ribosomal_bL25/Gln-tRNA_synth"/>
</dbReference>
<dbReference type="InterPro" id="IPR020057">
    <property type="entry name" value="Ribosomal_bL25_b-dom"/>
</dbReference>
<dbReference type="InterPro" id="IPR037121">
    <property type="entry name" value="Ribosomal_bL25_C"/>
</dbReference>
<dbReference type="InterPro" id="IPR001021">
    <property type="entry name" value="Ribosomal_bL25_long"/>
</dbReference>
<dbReference type="InterPro" id="IPR029751">
    <property type="entry name" value="Ribosomal_L25_dom"/>
</dbReference>
<dbReference type="InterPro" id="IPR020930">
    <property type="entry name" value="Ribosomal_uL5_bac-type"/>
</dbReference>
<dbReference type="NCBIfam" id="TIGR00731">
    <property type="entry name" value="bL25_bact_ctc"/>
    <property type="match status" value="1"/>
</dbReference>
<dbReference type="PANTHER" id="PTHR33284">
    <property type="entry name" value="RIBOSOMAL PROTEIN L25/GLN-TRNA SYNTHETASE, ANTI-CODON-BINDING DOMAIN-CONTAINING PROTEIN"/>
    <property type="match status" value="1"/>
</dbReference>
<dbReference type="PANTHER" id="PTHR33284:SF1">
    <property type="entry name" value="RIBOSOMAL PROTEIN L25_GLN-TRNA SYNTHETASE, ANTI-CODON-BINDING DOMAIN-CONTAINING PROTEIN"/>
    <property type="match status" value="1"/>
</dbReference>
<dbReference type="Pfam" id="PF01386">
    <property type="entry name" value="Ribosomal_L25p"/>
    <property type="match status" value="1"/>
</dbReference>
<dbReference type="Pfam" id="PF14693">
    <property type="entry name" value="Ribosomal_TL5_C"/>
    <property type="match status" value="1"/>
</dbReference>
<dbReference type="SUPFAM" id="SSF50715">
    <property type="entry name" value="Ribosomal protein L25-like"/>
    <property type="match status" value="1"/>
</dbReference>
<accession>Q0B0S7</accession>
<comment type="function">
    <text evidence="1">This is one of the proteins that binds to the 5S RNA in the ribosome where it forms part of the central protuberance.</text>
</comment>
<comment type="subunit">
    <text evidence="1">Part of the 50S ribosomal subunit; part of the 5S rRNA/L5/L18/L25 subcomplex. Contacts the 5S rRNA. Binds to the 5S rRNA independently of L5 and L18.</text>
</comment>
<comment type="similarity">
    <text evidence="1">Belongs to the bacterial ribosomal protein bL25 family. CTC subfamily.</text>
</comment>
<keyword id="KW-1185">Reference proteome</keyword>
<keyword id="KW-0687">Ribonucleoprotein</keyword>
<keyword id="KW-0689">Ribosomal protein</keyword>
<keyword id="KW-0694">RNA-binding</keyword>
<keyword id="KW-0699">rRNA-binding</keyword>
<gene>
    <name evidence="1" type="primary">rplY</name>
    <name evidence="1" type="synonym">ctc</name>
    <name type="ordered locus">Swol_0069</name>
</gene>
<sequence length="209" mass="22796">MLGQKLNARKREIKNRGYLNQLKRSEQVPAVIYGKGEEAVPIILEKRELNRIFNVHGSRGLFSLEIEGESKPMMTLIREIQRNPVSGQLIHLDFLSVNLNEKINSNVGVLLGGEEEVMKKGGILQAGLKEVEVLCFPQDLPEYLSADISSLEIGETLHVADLIVPAGVEILTEAESVIASILAPSKATTGEEEGAEAAGEGEEAEEKPE</sequence>
<reference key="1">
    <citation type="journal article" date="2010" name="Environ. Microbiol.">
        <title>The genome of Syntrophomonas wolfei: new insights into syntrophic metabolism and biohydrogen production.</title>
        <authorList>
            <person name="Sieber J.R."/>
            <person name="Sims D.R."/>
            <person name="Han C."/>
            <person name="Kim E."/>
            <person name="Lykidis A."/>
            <person name="Lapidus A.L."/>
            <person name="McDonnald E."/>
            <person name="Rohlin L."/>
            <person name="Culley D.E."/>
            <person name="Gunsalus R."/>
            <person name="McInerney M.J."/>
        </authorList>
    </citation>
    <scope>NUCLEOTIDE SEQUENCE [LARGE SCALE GENOMIC DNA]</scope>
    <source>
        <strain>DSM 2245B / Goettingen</strain>
    </source>
</reference>